<accession>B2VG00</accession>
<sequence>MAQHDENVVWHAHPVTREAREHLQGHRGAVLWFTGLSGSGKSTVAGALEQALHQLGVSSYLLDGDNVRHGLCRDLGFSDDDRKENIRRVGEVARLMVDAGLVVLTAFISPHRAERQMVRDMLGEGRFIEVFVDTPLAICEARDPKGLYKKARAGELRNFTGIDAEYQVPLHADIHLDGEQLVTHLTRQLLDLLRQQDIIKP</sequence>
<protein>
    <recommendedName>
        <fullName evidence="1">Adenylyl-sulfate kinase</fullName>
        <ecNumber evidence="1">2.7.1.25</ecNumber>
    </recommendedName>
    <alternativeName>
        <fullName evidence="1">APS kinase</fullName>
    </alternativeName>
    <alternativeName>
        <fullName evidence="1">ATP adenosine-5'-phosphosulfate 3'-phosphotransferase</fullName>
    </alternativeName>
    <alternativeName>
        <fullName evidence="1">Adenosine-5'-phosphosulfate kinase</fullName>
    </alternativeName>
</protein>
<proteinExistence type="inferred from homology"/>
<gene>
    <name evidence="1" type="primary">cysC</name>
    <name type="ordered locus">ETA_27040</name>
</gene>
<name>CYSC_ERWT9</name>
<organism>
    <name type="scientific">Erwinia tasmaniensis (strain DSM 17950 / CFBP 7177 / CIP 109463 / NCPPB 4357 / Et1/99)</name>
    <dbReference type="NCBI Taxonomy" id="465817"/>
    <lineage>
        <taxon>Bacteria</taxon>
        <taxon>Pseudomonadati</taxon>
        <taxon>Pseudomonadota</taxon>
        <taxon>Gammaproteobacteria</taxon>
        <taxon>Enterobacterales</taxon>
        <taxon>Erwiniaceae</taxon>
        <taxon>Erwinia</taxon>
    </lineage>
</organism>
<feature type="chain" id="PRO_1000092242" description="Adenylyl-sulfate kinase">
    <location>
        <begin position="1"/>
        <end position="201"/>
    </location>
</feature>
<feature type="active site" description="Phosphoserine intermediate" evidence="1">
    <location>
        <position position="109"/>
    </location>
</feature>
<feature type="binding site" evidence="1">
    <location>
        <begin position="35"/>
        <end position="42"/>
    </location>
    <ligand>
        <name>ATP</name>
        <dbReference type="ChEBI" id="CHEBI:30616"/>
    </ligand>
</feature>
<reference key="1">
    <citation type="journal article" date="2008" name="Environ. Microbiol.">
        <title>The genome of Erwinia tasmaniensis strain Et1/99, a non-pathogenic bacterium in the genus Erwinia.</title>
        <authorList>
            <person name="Kube M."/>
            <person name="Migdoll A.M."/>
            <person name="Mueller I."/>
            <person name="Kuhl H."/>
            <person name="Beck A."/>
            <person name="Reinhardt R."/>
            <person name="Geider K."/>
        </authorList>
    </citation>
    <scope>NUCLEOTIDE SEQUENCE [LARGE SCALE GENOMIC DNA]</scope>
    <source>
        <strain>DSM 17950 / CFBP 7177 / CIP 109463 / NCPPB 4357 / Et1/99</strain>
    </source>
</reference>
<evidence type="ECO:0000255" key="1">
    <source>
        <dbReference type="HAMAP-Rule" id="MF_00065"/>
    </source>
</evidence>
<dbReference type="EC" id="2.7.1.25" evidence="1"/>
<dbReference type="EMBL" id="CU468135">
    <property type="protein sequence ID" value="CAO97750.1"/>
    <property type="molecule type" value="Genomic_DNA"/>
</dbReference>
<dbReference type="RefSeq" id="WP_012442407.1">
    <property type="nucleotide sequence ID" value="NC_010694.1"/>
</dbReference>
<dbReference type="SMR" id="B2VG00"/>
<dbReference type="STRING" id="465817.ETA_27040"/>
<dbReference type="KEGG" id="eta:ETA_27040"/>
<dbReference type="eggNOG" id="COG0529">
    <property type="taxonomic scope" value="Bacteria"/>
</dbReference>
<dbReference type="HOGENOM" id="CLU_046932_1_0_6"/>
<dbReference type="OrthoDB" id="9804504at2"/>
<dbReference type="UniPathway" id="UPA00140">
    <property type="reaction ID" value="UER00205"/>
</dbReference>
<dbReference type="Proteomes" id="UP000001726">
    <property type="component" value="Chromosome"/>
</dbReference>
<dbReference type="GO" id="GO:0004020">
    <property type="term" value="F:adenylylsulfate kinase activity"/>
    <property type="evidence" value="ECO:0007669"/>
    <property type="project" value="UniProtKB-UniRule"/>
</dbReference>
<dbReference type="GO" id="GO:0005524">
    <property type="term" value="F:ATP binding"/>
    <property type="evidence" value="ECO:0007669"/>
    <property type="project" value="UniProtKB-UniRule"/>
</dbReference>
<dbReference type="GO" id="GO:0070814">
    <property type="term" value="P:hydrogen sulfide biosynthetic process"/>
    <property type="evidence" value="ECO:0007669"/>
    <property type="project" value="UniProtKB-UniRule"/>
</dbReference>
<dbReference type="GO" id="GO:0000103">
    <property type="term" value="P:sulfate assimilation"/>
    <property type="evidence" value="ECO:0007669"/>
    <property type="project" value="UniProtKB-UniRule"/>
</dbReference>
<dbReference type="CDD" id="cd02027">
    <property type="entry name" value="APSK"/>
    <property type="match status" value="1"/>
</dbReference>
<dbReference type="FunFam" id="3.40.50.300:FF:000212">
    <property type="entry name" value="Adenylyl-sulfate kinase"/>
    <property type="match status" value="1"/>
</dbReference>
<dbReference type="Gene3D" id="3.40.50.300">
    <property type="entry name" value="P-loop containing nucleotide triphosphate hydrolases"/>
    <property type="match status" value="1"/>
</dbReference>
<dbReference type="HAMAP" id="MF_00065">
    <property type="entry name" value="Adenylyl_sulf_kinase"/>
    <property type="match status" value="1"/>
</dbReference>
<dbReference type="InterPro" id="IPR002891">
    <property type="entry name" value="APS_kinase"/>
</dbReference>
<dbReference type="InterPro" id="IPR027417">
    <property type="entry name" value="P-loop_NTPase"/>
</dbReference>
<dbReference type="NCBIfam" id="TIGR00455">
    <property type="entry name" value="apsK"/>
    <property type="match status" value="1"/>
</dbReference>
<dbReference type="NCBIfam" id="NF003013">
    <property type="entry name" value="PRK03846.1"/>
    <property type="match status" value="1"/>
</dbReference>
<dbReference type="PANTHER" id="PTHR11055:SF63">
    <property type="entry name" value="ADENYLYL-SULFATE KINASE 1, CHLOROPLASTIC"/>
    <property type="match status" value="1"/>
</dbReference>
<dbReference type="PANTHER" id="PTHR11055">
    <property type="entry name" value="BIFUNCTIONAL 3'-PHOSPHOADENOSINE 5'-PHOSPHOSULFATE SYNTHASE"/>
    <property type="match status" value="1"/>
</dbReference>
<dbReference type="Pfam" id="PF01583">
    <property type="entry name" value="APS_kinase"/>
    <property type="match status" value="1"/>
</dbReference>
<dbReference type="SUPFAM" id="SSF52540">
    <property type="entry name" value="P-loop containing nucleoside triphosphate hydrolases"/>
    <property type="match status" value="1"/>
</dbReference>
<keyword id="KW-0067">ATP-binding</keyword>
<keyword id="KW-0418">Kinase</keyword>
<keyword id="KW-0547">Nucleotide-binding</keyword>
<keyword id="KW-0597">Phosphoprotein</keyword>
<keyword id="KW-1185">Reference proteome</keyword>
<keyword id="KW-0808">Transferase</keyword>
<comment type="function">
    <text evidence="1">Catalyzes the synthesis of activated sulfate.</text>
</comment>
<comment type="catalytic activity">
    <reaction evidence="1">
        <text>adenosine 5'-phosphosulfate + ATP = 3'-phosphoadenylyl sulfate + ADP + H(+)</text>
        <dbReference type="Rhea" id="RHEA:24152"/>
        <dbReference type="ChEBI" id="CHEBI:15378"/>
        <dbReference type="ChEBI" id="CHEBI:30616"/>
        <dbReference type="ChEBI" id="CHEBI:58243"/>
        <dbReference type="ChEBI" id="CHEBI:58339"/>
        <dbReference type="ChEBI" id="CHEBI:456216"/>
        <dbReference type="EC" id="2.7.1.25"/>
    </reaction>
</comment>
<comment type="pathway">
    <text evidence="1">Sulfur metabolism; hydrogen sulfide biosynthesis; sulfite from sulfate: step 2/3.</text>
</comment>
<comment type="similarity">
    <text evidence="1">Belongs to the APS kinase family.</text>
</comment>